<feature type="chain" id="PRO_0000208092" description="Putative O-acetyltransferase SAV0974">
    <location>
        <begin position="1"/>
        <end position="604"/>
    </location>
</feature>
<feature type="transmembrane region" description="Helical" evidence="2">
    <location>
        <begin position="15"/>
        <end position="35"/>
    </location>
</feature>
<feature type="transmembrane region" description="Helical" evidence="2">
    <location>
        <begin position="43"/>
        <end position="63"/>
    </location>
</feature>
<feature type="transmembrane region" description="Helical" evidence="2">
    <location>
        <begin position="85"/>
        <end position="105"/>
    </location>
</feature>
<feature type="transmembrane region" description="Helical" evidence="2">
    <location>
        <begin position="150"/>
        <end position="170"/>
    </location>
</feature>
<feature type="transmembrane region" description="Helical" evidence="2">
    <location>
        <begin position="176"/>
        <end position="196"/>
    </location>
</feature>
<feature type="transmembrane region" description="Helical" evidence="2">
    <location>
        <begin position="212"/>
        <end position="232"/>
    </location>
</feature>
<feature type="transmembrane region" description="Helical" evidence="2">
    <location>
        <begin position="240"/>
        <end position="260"/>
    </location>
</feature>
<feature type="transmembrane region" description="Helical" evidence="2">
    <location>
        <begin position="267"/>
        <end position="287"/>
    </location>
</feature>
<feature type="transmembrane region" description="Helical" evidence="2">
    <location>
        <begin position="310"/>
        <end position="330"/>
    </location>
</feature>
<feature type="transmembrane region" description="Helical" evidence="2">
    <location>
        <begin position="332"/>
        <end position="352"/>
    </location>
</feature>
<feature type="transmembrane region" description="Helical" evidence="2">
    <location>
        <begin position="377"/>
        <end position="397"/>
    </location>
</feature>
<feature type="active site" evidence="1">
    <location>
        <position position="459"/>
    </location>
</feature>
<feature type="active site" evidence="1">
    <location>
        <position position="581"/>
    </location>
</feature>
<feature type="active site" evidence="1">
    <location>
        <position position="584"/>
    </location>
</feature>
<organism>
    <name type="scientific">Staphylococcus aureus (strain Mu50 / ATCC 700699)</name>
    <dbReference type="NCBI Taxonomy" id="158878"/>
    <lineage>
        <taxon>Bacteria</taxon>
        <taxon>Bacillati</taxon>
        <taxon>Bacillota</taxon>
        <taxon>Bacilli</taxon>
        <taxon>Bacillales</taxon>
        <taxon>Staphylococcaceae</taxon>
        <taxon>Staphylococcus</taxon>
    </lineage>
</organism>
<dbReference type="EC" id="2.3.1.-"/>
<dbReference type="EMBL" id="BA000017">
    <property type="protein sequence ID" value="BAB57136.1"/>
    <property type="molecule type" value="Genomic_DNA"/>
</dbReference>
<dbReference type="RefSeq" id="WP_001044230.1">
    <property type="nucleotide sequence ID" value="NC_002758.2"/>
</dbReference>
<dbReference type="SMR" id="Q99VB6"/>
<dbReference type="KEGG" id="sav:SAV0974"/>
<dbReference type="HOGENOM" id="CLU_005679_11_2_9"/>
<dbReference type="PhylomeDB" id="Q99VB6"/>
<dbReference type="Proteomes" id="UP000002481">
    <property type="component" value="Chromosome"/>
</dbReference>
<dbReference type="GO" id="GO:0005886">
    <property type="term" value="C:plasma membrane"/>
    <property type="evidence" value="ECO:0007669"/>
    <property type="project" value="UniProtKB-SubCell"/>
</dbReference>
<dbReference type="GO" id="GO:0016747">
    <property type="term" value="F:acyltransferase activity, transferring groups other than amino-acyl groups"/>
    <property type="evidence" value="ECO:0007669"/>
    <property type="project" value="InterPro"/>
</dbReference>
<dbReference type="GO" id="GO:0009103">
    <property type="term" value="P:lipopolysaccharide biosynthetic process"/>
    <property type="evidence" value="ECO:0007669"/>
    <property type="project" value="TreeGrafter"/>
</dbReference>
<dbReference type="CDD" id="cd01840">
    <property type="entry name" value="SGNH_hydrolase_yrhL_like"/>
    <property type="match status" value="1"/>
</dbReference>
<dbReference type="FunFam" id="3.40.50.1110:FF:000006">
    <property type="entry name" value="O-acetyltransferase OatA"/>
    <property type="match status" value="1"/>
</dbReference>
<dbReference type="Gene3D" id="3.40.50.1110">
    <property type="entry name" value="SGNH hydrolase"/>
    <property type="match status" value="1"/>
</dbReference>
<dbReference type="InterPro" id="IPR002656">
    <property type="entry name" value="Acyl_transf_3_dom"/>
</dbReference>
<dbReference type="InterPro" id="IPR050879">
    <property type="entry name" value="Acyltransferase_3"/>
</dbReference>
<dbReference type="InterPro" id="IPR036514">
    <property type="entry name" value="SGNH_hydro_sf"/>
</dbReference>
<dbReference type="PANTHER" id="PTHR23028">
    <property type="entry name" value="ACETYLTRANSFERASE"/>
    <property type="match status" value="1"/>
</dbReference>
<dbReference type="PANTHER" id="PTHR23028:SF53">
    <property type="entry name" value="ACYL_TRANSF_3 DOMAIN-CONTAINING PROTEIN"/>
    <property type="match status" value="1"/>
</dbReference>
<dbReference type="Pfam" id="PF01757">
    <property type="entry name" value="Acyl_transf_3"/>
    <property type="match status" value="1"/>
</dbReference>
<dbReference type="SUPFAM" id="SSF52266">
    <property type="entry name" value="SGNH hydrolase"/>
    <property type="match status" value="1"/>
</dbReference>
<gene>
    <name type="ordered locus">SAV0974</name>
</gene>
<comment type="subcellular location">
    <subcellularLocation>
        <location evidence="3">Cell membrane</location>
        <topology evidence="3">Multi-pass membrane protein</topology>
    </subcellularLocation>
</comment>
<comment type="similarity">
    <text evidence="3">Belongs to the acyltransferase 3 family.</text>
</comment>
<sequence>MNKTKGFTKYKKMRYMPGLDGLRAIAVLGIIIYHLNKQWLTGGFLGVDTFFVISGYLITSLLLKEYDDTGIIKLKSFWIRRLKRLLPAVIVLLMVVGTATLLLKSDNIIRVKHDIIAAIFYVSNWWYIAKDVNYFEQFSFMPLKHLWSLAIEEQFYIFFPVILVTLLLTIKKRYKIGFIFWGVSIISLGLMMFIYSINGDHSRVYFGTDTRLQTLLLGVILAFLWPPFKLKNDPPKVVKYVIDSIGSLSFIVLILLFFIINDETNWIYDGGFYLISILTLFIIASVVHPSTWIAKIFSNPVLVFIGKRSYSLYLWHFAVISFVHSYYVDGQIPVYVYFIDISLTIIFAELSYRFIETPFRKEGIKALNWRPSYIPQFIRMAIVVTLLIPFMLILVGAFNKYGKDIIGEKANSFDTTIEDNYLMRIAPIDNIHIDGLVSEKKKESSDVYNNIKPLLIGDSVMVDIGESFKSSVPKSRIDGKVGRQLYQTLPLVKANYSQYKKSSDQVVLELGTNGDFTVKQLDDLLNQFGKAKIYLVNTRVPRIYEANVNRLLADAAKRKSNVTLIDWNKRSQGHSEYFAPDGVHLEYKGVLALKDEILKALKKK</sequence>
<proteinExistence type="inferred from homology"/>
<reference key="1">
    <citation type="journal article" date="2001" name="Lancet">
        <title>Whole genome sequencing of meticillin-resistant Staphylococcus aureus.</title>
        <authorList>
            <person name="Kuroda M."/>
            <person name="Ohta T."/>
            <person name="Uchiyama I."/>
            <person name="Baba T."/>
            <person name="Yuzawa H."/>
            <person name="Kobayashi I."/>
            <person name="Cui L."/>
            <person name="Oguchi A."/>
            <person name="Aoki K."/>
            <person name="Nagai Y."/>
            <person name="Lian J.-Q."/>
            <person name="Ito T."/>
            <person name="Kanamori M."/>
            <person name="Matsumaru H."/>
            <person name="Maruyama A."/>
            <person name="Murakami H."/>
            <person name="Hosoyama A."/>
            <person name="Mizutani-Ui Y."/>
            <person name="Takahashi N.K."/>
            <person name="Sawano T."/>
            <person name="Inoue R."/>
            <person name="Kaito C."/>
            <person name="Sekimizu K."/>
            <person name="Hirakawa H."/>
            <person name="Kuhara S."/>
            <person name="Goto S."/>
            <person name="Yabuzaki J."/>
            <person name="Kanehisa M."/>
            <person name="Yamashita A."/>
            <person name="Oshima K."/>
            <person name="Furuya K."/>
            <person name="Yoshino C."/>
            <person name="Shiba T."/>
            <person name="Hattori M."/>
            <person name="Ogasawara N."/>
            <person name="Hayashi H."/>
            <person name="Hiramatsu K."/>
        </authorList>
    </citation>
    <scope>NUCLEOTIDE SEQUENCE [LARGE SCALE GENOMIC DNA]</scope>
    <source>
        <strain>Mu50 / ATCC 700699</strain>
    </source>
</reference>
<evidence type="ECO:0000250" key="1">
    <source>
        <dbReference type="UniProtKB" id="Q2FV54"/>
    </source>
</evidence>
<evidence type="ECO:0000255" key="2"/>
<evidence type="ECO:0000305" key="3"/>
<accession>Q99VB6</accession>
<keyword id="KW-0012">Acyltransferase</keyword>
<keyword id="KW-1003">Cell membrane</keyword>
<keyword id="KW-0472">Membrane</keyword>
<keyword id="KW-0808">Transferase</keyword>
<keyword id="KW-0812">Transmembrane</keyword>
<keyword id="KW-1133">Transmembrane helix</keyword>
<name>OTRF1_STAAM</name>
<protein>
    <recommendedName>
        <fullName>Putative O-acetyltransferase SAV0974</fullName>
        <ecNumber>2.3.1.-</ecNumber>
    </recommendedName>
</protein>